<name>RL20_VIBCM</name>
<reference key="1">
    <citation type="journal article" date="2008" name="PLoS ONE">
        <title>A recalibrated molecular clock and independent origins for the cholera pandemic clones.</title>
        <authorList>
            <person name="Feng L."/>
            <person name="Reeves P.R."/>
            <person name="Lan R."/>
            <person name="Ren Y."/>
            <person name="Gao C."/>
            <person name="Zhou Z."/>
            <person name="Ren Y."/>
            <person name="Cheng J."/>
            <person name="Wang W."/>
            <person name="Wang J."/>
            <person name="Qian W."/>
            <person name="Li D."/>
            <person name="Wang L."/>
        </authorList>
    </citation>
    <scope>NUCLEOTIDE SEQUENCE [LARGE SCALE GENOMIC DNA]</scope>
    <source>
        <strain>M66-2</strain>
    </source>
</reference>
<accession>C3LUW1</accession>
<comment type="function">
    <text evidence="1">Binds directly to 23S ribosomal RNA and is necessary for the in vitro assembly process of the 50S ribosomal subunit. It is not involved in the protein synthesizing functions of that subunit.</text>
</comment>
<comment type="similarity">
    <text evidence="1">Belongs to the bacterial ribosomal protein bL20 family.</text>
</comment>
<dbReference type="EMBL" id="CP001234">
    <property type="protein sequence ID" value="ACP07266.1"/>
    <property type="molecule type" value="Genomic_DNA"/>
</dbReference>
<dbReference type="RefSeq" id="WP_001138366.1">
    <property type="nucleotide sequence ID" value="NC_012580.1"/>
</dbReference>
<dbReference type="SMR" id="C3LUW1"/>
<dbReference type="GeneID" id="93954679"/>
<dbReference type="KEGG" id="vcm:VCM66_A0289"/>
<dbReference type="HOGENOM" id="CLU_123265_0_1_6"/>
<dbReference type="Proteomes" id="UP000001217">
    <property type="component" value="Chromosome II"/>
</dbReference>
<dbReference type="GO" id="GO:1990904">
    <property type="term" value="C:ribonucleoprotein complex"/>
    <property type="evidence" value="ECO:0007669"/>
    <property type="project" value="UniProtKB-KW"/>
</dbReference>
<dbReference type="GO" id="GO:0005840">
    <property type="term" value="C:ribosome"/>
    <property type="evidence" value="ECO:0007669"/>
    <property type="project" value="UniProtKB-KW"/>
</dbReference>
<dbReference type="GO" id="GO:0019843">
    <property type="term" value="F:rRNA binding"/>
    <property type="evidence" value="ECO:0007669"/>
    <property type="project" value="UniProtKB-UniRule"/>
</dbReference>
<dbReference type="GO" id="GO:0003735">
    <property type="term" value="F:structural constituent of ribosome"/>
    <property type="evidence" value="ECO:0007669"/>
    <property type="project" value="InterPro"/>
</dbReference>
<dbReference type="GO" id="GO:0000027">
    <property type="term" value="P:ribosomal large subunit assembly"/>
    <property type="evidence" value="ECO:0007669"/>
    <property type="project" value="UniProtKB-UniRule"/>
</dbReference>
<dbReference type="GO" id="GO:0006412">
    <property type="term" value="P:translation"/>
    <property type="evidence" value="ECO:0007669"/>
    <property type="project" value="InterPro"/>
</dbReference>
<dbReference type="CDD" id="cd07026">
    <property type="entry name" value="Ribosomal_L20"/>
    <property type="match status" value="1"/>
</dbReference>
<dbReference type="FunFam" id="1.10.1900.20:FF:000001">
    <property type="entry name" value="50S ribosomal protein L20"/>
    <property type="match status" value="1"/>
</dbReference>
<dbReference type="Gene3D" id="6.10.160.10">
    <property type="match status" value="1"/>
</dbReference>
<dbReference type="Gene3D" id="1.10.1900.20">
    <property type="entry name" value="Ribosomal protein L20"/>
    <property type="match status" value="1"/>
</dbReference>
<dbReference type="HAMAP" id="MF_00382">
    <property type="entry name" value="Ribosomal_bL20"/>
    <property type="match status" value="1"/>
</dbReference>
<dbReference type="InterPro" id="IPR005813">
    <property type="entry name" value="Ribosomal_bL20"/>
</dbReference>
<dbReference type="InterPro" id="IPR049946">
    <property type="entry name" value="RIBOSOMAL_L20_CS"/>
</dbReference>
<dbReference type="InterPro" id="IPR035566">
    <property type="entry name" value="Ribosomal_protein_bL20_C"/>
</dbReference>
<dbReference type="NCBIfam" id="TIGR01032">
    <property type="entry name" value="rplT_bact"/>
    <property type="match status" value="1"/>
</dbReference>
<dbReference type="PANTHER" id="PTHR10986">
    <property type="entry name" value="39S RIBOSOMAL PROTEIN L20"/>
    <property type="match status" value="1"/>
</dbReference>
<dbReference type="Pfam" id="PF00453">
    <property type="entry name" value="Ribosomal_L20"/>
    <property type="match status" value="1"/>
</dbReference>
<dbReference type="PRINTS" id="PR00062">
    <property type="entry name" value="RIBOSOMALL20"/>
</dbReference>
<dbReference type="SUPFAM" id="SSF74731">
    <property type="entry name" value="Ribosomal protein L20"/>
    <property type="match status" value="1"/>
</dbReference>
<dbReference type="PROSITE" id="PS00937">
    <property type="entry name" value="RIBOSOMAL_L20"/>
    <property type="match status" value="1"/>
</dbReference>
<sequence>MPRVKRGVQARARHKKVLKQAKGYYGARSRVYRVAFQAVIKAGQYAYRDRRAKKRQFRQLWIARINAAARQNGLSYSRFINGLKKASIEIDRKILADIAVFDKAAFAVLVEKAKGAL</sequence>
<keyword id="KW-0687">Ribonucleoprotein</keyword>
<keyword id="KW-0689">Ribosomal protein</keyword>
<keyword id="KW-0694">RNA-binding</keyword>
<keyword id="KW-0699">rRNA-binding</keyword>
<proteinExistence type="inferred from homology"/>
<evidence type="ECO:0000255" key="1">
    <source>
        <dbReference type="HAMAP-Rule" id="MF_00382"/>
    </source>
</evidence>
<evidence type="ECO:0000305" key="2"/>
<protein>
    <recommendedName>
        <fullName evidence="1">Large ribosomal subunit protein bL20</fullName>
    </recommendedName>
    <alternativeName>
        <fullName evidence="2">50S ribosomal protein L20</fullName>
    </alternativeName>
</protein>
<feature type="chain" id="PRO_1000134233" description="Large ribosomal subunit protein bL20">
    <location>
        <begin position="1"/>
        <end position="117"/>
    </location>
</feature>
<organism>
    <name type="scientific">Vibrio cholerae serotype O1 (strain M66-2)</name>
    <dbReference type="NCBI Taxonomy" id="579112"/>
    <lineage>
        <taxon>Bacteria</taxon>
        <taxon>Pseudomonadati</taxon>
        <taxon>Pseudomonadota</taxon>
        <taxon>Gammaproteobacteria</taxon>
        <taxon>Vibrionales</taxon>
        <taxon>Vibrionaceae</taxon>
        <taxon>Vibrio</taxon>
    </lineage>
</organism>
<gene>
    <name evidence="1" type="primary">rplT</name>
    <name type="ordered locus">VCM66_A0289</name>
</gene>